<accession>Q5AYR1</accession>
<accession>C8V0V2</accession>
<proteinExistence type="inferred from homology"/>
<feature type="chain" id="PRO_0000278935" description="tRNA N6-adenosine threonylcarbamoyltransferase">
    <location>
        <begin position="1"/>
        <end position="363"/>
    </location>
</feature>
<feature type="binding site" evidence="1">
    <location>
        <position position="114"/>
    </location>
    <ligand>
        <name>a divalent metal cation</name>
        <dbReference type="ChEBI" id="CHEBI:60240"/>
    </ligand>
</feature>
<feature type="binding site" evidence="1">
    <location>
        <position position="118"/>
    </location>
    <ligand>
        <name>a divalent metal cation</name>
        <dbReference type="ChEBI" id="CHEBI:60240"/>
    </ligand>
</feature>
<feature type="binding site" evidence="1">
    <location>
        <begin position="135"/>
        <end position="139"/>
    </location>
    <ligand>
        <name>substrate</name>
    </ligand>
</feature>
<feature type="binding site" evidence="1">
    <location>
        <position position="135"/>
    </location>
    <ligand>
        <name>a divalent metal cation</name>
        <dbReference type="ChEBI" id="CHEBI:60240"/>
    </ligand>
</feature>
<feature type="binding site" evidence="1">
    <location>
        <position position="167"/>
    </location>
    <ligand>
        <name>substrate</name>
    </ligand>
</feature>
<feature type="binding site" evidence="1">
    <location>
        <position position="182"/>
    </location>
    <ligand>
        <name>substrate</name>
    </ligand>
</feature>
<feature type="binding site" evidence="1">
    <location>
        <position position="186"/>
    </location>
    <ligand>
        <name>substrate</name>
    </ligand>
</feature>
<feature type="binding site" evidence="1">
    <location>
        <position position="294"/>
    </location>
    <ligand>
        <name>substrate</name>
    </ligand>
</feature>
<feature type="binding site" evidence="1">
    <location>
        <position position="322"/>
    </location>
    <ligand>
        <name>a divalent metal cation</name>
        <dbReference type="ChEBI" id="CHEBI:60240"/>
    </ligand>
</feature>
<organism>
    <name type="scientific">Emericella nidulans (strain FGSC A4 / ATCC 38163 / CBS 112.46 / NRRL 194 / M139)</name>
    <name type="common">Aspergillus nidulans</name>
    <dbReference type="NCBI Taxonomy" id="227321"/>
    <lineage>
        <taxon>Eukaryota</taxon>
        <taxon>Fungi</taxon>
        <taxon>Dikarya</taxon>
        <taxon>Ascomycota</taxon>
        <taxon>Pezizomycotina</taxon>
        <taxon>Eurotiomycetes</taxon>
        <taxon>Eurotiomycetidae</taxon>
        <taxon>Eurotiales</taxon>
        <taxon>Aspergillaceae</taxon>
        <taxon>Aspergillus</taxon>
        <taxon>Aspergillus subgen. Nidulantes</taxon>
    </lineage>
</organism>
<gene>
    <name type="primary">kae1</name>
    <name type="ORF">AN6569</name>
</gene>
<comment type="function">
    <text evidence="1">Component of the EKC/KEOPS complex that is required for the formation of a threonylcarbamoyl group on adenosine at position 37 (t(6)A37) in tRNAs that read codons beginning with adenine. The complex is probably involved in the transfer of the threonylcarbamoyl moiety of threonylcarbamoyl-AMP (TC-AMP) to the N6 group of A37. Kae1 likely plays a direct catalytic role in this reaction, but requires other protein(s) of the complex to fulfill this activity. The EKC/KEOPS complex also promotes both telomere uncapping and telomere elongation. The complex is required for efficient recruitment of transcriptional coactivators.</text>
</comment>
<comment type="catalytic activity">
    <reaction evidence="1">
        <text>L-threonylcarbamoyladenylate + adenosine(37) in tRNA = N(6)-L-threonylcarbamoyladenosine(37) in tRNA + AMP + H(+)</text>
        <dbReference type="Rhea" id="RHEA:37059"/>
        <dbReference type="Rhea" id="RHEA-COMP:10162"/>
        <dbReference type="Rhea" id="RHEA-COMP:10163"/>
        <dbReference type="ChEBI" id="CHEBI:15378"/>
        <dbReference type="ChEBI" id="CHEBI:73682"/>
        <dbReference type="ChEBI" id="CHEBI:74411"/>
        <dbReference type="ChEBI" id="CHEBI:74418"/>
        <dbReference type="ChEBI" id="CHEBI:456215"/>
        <dbReference type="EC" id="2.3.1.234"/>
    </reaction>
</comment>
<comment type="cofactor">
    <cofactor evidence="1">
        <name>a divalent metal cation</name>
        <dbReference type="ChEBI" id="CHEBI:60240"/>
    </cofactor>
    <text evidence="1">Binds 1 divalent metal cation per subunit.</text>
</comment>
<comment type="subunit">
    <text evidence="1">Component of the EKC/KEOPS complex composed of at least bud32, cgi121, gon7, kae1 and pcc1; the whole complex dimerizes.</text>
</comment>
<comment type="subcellular location">
    <subcellularLocation>
        <location evidence="1">Cytoplasm</location>
    </subcellularLocation>
    <subcellularLocation>
        <location evidence="1">Nucleus</location>
    </subcellularLocation>
</comment>
<comment type="similarity">
    <text evidence="1">Belongs to the KAE1 / TsaD family.</text>
</comment>
<name>KAE1_EMENI</name>
<sequence>MIAIGLEGSANKLGVGIMLHPKDGSTPQVLANIRHTYVSPPGEGFLPKDTARHHRSWVVSLVKKALKEARISVDDVDCICYTKGPGMGAPLQSVAVAARTLSLLWGKELVGVNHCVGHIEMGRLITGASNPVVLYVSGGNTQVIAYSSQRYRIFGETLDIAVGNCLDRFARTLHISNDPAPGYNIEQLAKKGKQLVDLPYTVKGMDCSMSGILAAIDALAATYGLNGEQPDEEEDVTDVTPVSDGALESRKPTRADLCFSLQETVFSMLVEITERAMAHVGSKEVLIVGGVGCNERLQEMMGIMARDRGGSVHATDERFCIDNGIMIAQAGMLAYKTGFRTPLKESTCTQRFRTDDVFVQWRD</sequence>
<keyword id="KW-0010">Activator</keyword>
<keyword id="KW-0012">Acyltransferase</keyword>
<keyword id="KW-0963">Cytoplasm</keyword>
<keyword id="KW-0479">Metal-binding</keyword>
<keyword id="KW-0539">Nucleus</keyword>
<keyword id="KW-1185">Reference proteome</keyword>
<keyword id="KW-0804">Transcription</keyword>
<keyword id="KW-0805">Transcription regulation</keyword>
<keyword id="KW-0808">Transferase</keyword>
<keyword id="KW-0819">tRNA processing</keyword>
<evidence type="ECO:0000255" key="1">
    <source>
        <dbReference type="HAMAP-Rule" id="MF_03180"/>
    </source>
</evidence>
<reference key="1">
    <citation type="journal article" date="2005" name="Nature">
        <title>Sequencing of Aspergillus nidulans and comparative analysis with A. fumigatus and A. oryzae.</title>
        <authorList>
            <person name="Galagan J.E."/>
            <person name="Calvo S.E."/>
            <person name="Cuomo C."/>
            <person name="Ma L.-J."/>
            <person name="Wortman J.R."/>
            <person name="Batzoglou S."/>
            <person name="Lee S.-I."/>
            <person name="Bastuerkmen M."/>
            <person name="Spevak C.C."/>
            <person name="Clutterbuck J."/>
            <person name="Kapitonov V."/>
            <person name="Jurka J."/>
            <person name="Scazzocchio C."/>
            <person name="Farman M.L."/>
            <person name="Butler J."/>
            <person name="Purcell S."/>
            <person name="Harris S."/>
            <person name="Braus G.H."/>
            <person name="Draht O."/>
            <person name="Busch S."/>
            <person name="D'Enfert C."/>
            <person name="Bouchier C."/>
            <person name="Goldman G.H."/>
            <person name="Bell-Pedersen D."/>
            <person name="Griffiths-Jones S."/>
            <person name="Doonan J.H."/>
            <person name="Yu J."/>
            <person name="Vienken K."/>
            <person name="Pain A."/>
            <person name="Freitag M."/>
            <person name="Selker E.U."/>
            <person name="Archer D.B."/>
            <person name="Penalva M.A."/>
            <person name="Oakley B.R."/>
            <person name="Momany M."/>
            <person name="Tanaka T."/>
            <person name="Kumagai T."/>
            <person name="Asai K."/>
            <person name="Machida M."/>
            <person name="Nierman W.C."/>
            <person name="Denning D.W."/>
            <person name="Caddick M.X."/>
            <person name="Hynes M."/>
            <person name="Paoletti M."/>
            <person name="Fischer R."/>
            <person name="Miller B.L."/>
            <person name="Dyer P.S."/>
            <person name="Sachs M.S."/>
            <person name="Osmani S.A."/>
            <person name="Birren B.W."/>
        </authorList>
    </citation>
    <scope>NUCLEOTIDE SEQUENCE [LARGE SCALE GENOMIC DNA]</scope>
    <source>
        <strain>FGSC A4 / ATCC 38163 / CBS 112.46 / NRRL 194 / M139</strain>
    </source>
</reference>
<reference key="2">
    <citation type="journal article" date="2009" name="Fungal Genet. Biol.">
        <title>The 2008 update of the Aspergillus nidulans genome annotation: a community effort.</title>
        <authorList>
            <person name="Wortman J.R."/>
            <person name="Gilsenan J.M."/>
            <person name="Joardar V."/>
            <person name="Deegan J."/>
            <person name="Clutterbuck J."/>
            <person name="Andersen M.R."/>
            <person name="Archer D."/>
            <person name="Bencina M."/>
            <person name="Braus G."/>
            <person name="Coutinho P."/>
            <person name="von Dohren H."/>
            <person name="Doonan J."/>
            <person name="Driessen A.J."/>
            <person name="Durek P."/>
            <person name="Espeso E."/>
            <person name="Fekete E."/>
            <person name="Flipphi M."/>
            <person name="Estrada C.G."/>
            <person name="Geysens S."/>
            <person name="Goldman G."/>
            <person name="de Groot P.W."/>
            <person name="Hansen K."/>
            <person name="Harris S.D."/>
            <person name="Heinekamp T."/>
            <person name="Helmstaedt K."/>
            <person name="Henrissat B."/>
            <person name="Hofmann G."/>
            <person name="Homan T."/>
            <person name="Horio T."/>
            <person name="Horiuchi H."/>
            <person name="James S."/>
            <person name="Jones M."/>
            <person name="Karaffa L."/>
            <person name="Karanyi Z."/>
            <person name="Kato M."/>
            <person name="Keller N."/>
            <person name="Kelly D.E."/>
            <person name="Kiel J.A."/>
            <person name="Kim J.M."/>
            <person name="van der Klei I.J."/>
            <person name="Klis F.M."/>
            <person name="Kovalchuk A."/>
            <person name="Krasevec N."/>
            <person name="Kubicek C.P."/>
            <person name="Liu B."/>
            <person name="Maccabe A."/>
            <person name="Meyer V."/>
            <person name="Mirabito P."/>
            <person name="Miskei M."/>
            <person name="Mos M."/>
            <person name="Mullins J."/>
            <person name="Nelson D.R."/>
            <person name="Nielsen J."/>
            <person name="Oakley B.R."/>
            <person name="Osmani S.A."/>
            <person name="Pakula T."/>
            <person name="Paszewski A."/>
            <person name="Paulsen I."/>
            <person name="Pilsyk S."/>
            <person name="Pocsi I."/>
            <person name="Punt P.J."/>
            <person name="Ram A.F."/>
            <person name="Ren Q."/>
            <person name="Robellet X."/>
            <person name="Robson G."/>
            <person name="Seiboth B."/>
            <person name="van Solingen P."/>
            <person name="Specht T."/>
            <person name="Sun J."/>
            <person name="Taheri-Talesh N."/>
            <person name="Takeshita N."/>
            <person name="Ussery D."/>
            <person name="vanKuyk P.A."/>
            <person name="Visser H."/>
            <person name="van de Vondervoort P.J."/>
            <person name="de Vries R.P."/>
            <person name="Walton J."/>
            <person name="Xiang X."/>
            <person name="Xiong Y."/>
            <person name="Zeng A.P."/>
            <person name="Brandt B.W."/>
            <person name="Cornell M.J."/>
            <person name="van den Hondel C.A."/>
            <person name="Visser J."/>
            <person name="Oliver S.G."/>
            <person name="Turner G."/>
        </authorList>
    </citation>
    <scope>GENOME REANNOTATION</scope>
    <source>
        <strain>FGSC A4 / ATCC 38163 / CBS 112.46 / NRRL 194 / M139</strain>
    </source>
</reference>
<dbReference type="EC" id="2.3.1.234" evidence="1"/>
<dbReference type="EMBL" id="AACD01000109">
    <property type="protein sequence ID" value="EAA57909.1"/>
    <property type="molecule type" value="Genomic_DNA"/>
</dbReference>
<dbReference type="EMBL" id="BN001301">
    <property type="protein sequence ID" value="CBF71004.1"/>
    <property type="molecule type" value="Genomic_DNA"/>
</dbReference>
<dbReference type="RefSeq" id="XP_664173.1">
    <property type="nucleotide sequence ID" value="XM_659081.1"/>
</dbReference>
<dbReference type="SMR" id="Q5AYR1"/>
<dbReference type="FunCoup" id="Q5AYR1">
    <property type="interactions" value="585"/>
</dbReference>
<dbReference type="STRING" id="227321.Q5AYR1"/>
<dbReference type="EnsemblFungi" id="CBF71004">
    <property type="protein sequence ID" value="CBF71004"/>
    <property type="gene ID" value="ANIA_06569"/>
</dbReference>
<dbReference type="KEGG" id="ani:ANIA_06569"/>
<dbReference type="VEuPathDB" id="FungiDB:AN6569"/>
<dbReference type="eggNOG" id="KOG2708">
    <property type="taxonomic scope" value="Eukaryota"/>
</dbReference>
<dbReference type="HOGENOM" id="CLU_023208_2_2_1"/>
<dbReference type="InParanoid" id="Q5AYR1"/>
<dbReference type="OMA" id="HHRSWVV"/>
<dbReference type="OrthoDB" id="10254073at2759"/>
<dbReference type="Proteomes" id="UP000000560">
    <property type="component" value="Chromosome I"/>
</dbReference>
<dbReference type="GO" id="GO:0000785">
    <property type="term" value="C:chromatin"/>
    <property type="evidence" value="ECO:0007669"/>
    <property type="project" value="EnsemblFungi"/>
</dbReference>
<dbReference type="GO" id="GO:0005737">
    <property type="term" value="C:cytoplasm"/>
    <property type="evidence" value="ECO:0000318"/>
    <property type="project" value="GO_Central"/>
</dbReference>
<dbReference type="GO" id="GO:0000408">
    <property type="term" value="C:EKC/KEOPS complex"/>
    <property type="evidence" value="ECO:0000318"/>
    <property type="project" value="GO_Central"/>
</dbReference>
<dbReference type="GO" id="GO:0005634">
    <property type="term" value="C:nucleus"/>
    <property type="evidence" value="ECO:0007669"/>
    <property type="project" value="UniProtKB-SubCell"/>
</dbReference>
<dbReference type="GO" id="GO:0031490">
    <property type="term" value="F:chromatin DNA binding"/>
    <property type="evidence" value="ECO:0007669"/>
    <property type="project" value="EnsemblFungi"/>
</dbReference>
<dbReference type="GO" id="GO:0046872">
    <property type="term" value="F:metal ion binding"/>
    <property type="evidence" value="ECO:0007669"/>
    <property type="project" value="UniProtKB-KW"/>
</dbReference>
<dbReference type="GO" id="GO:0061711">
    <property type="term" value="F:N(6)-L-threonylcarbamoyladenine synthase activity"/>
    <property type="evidence" value="ECO:0007669"/>
    <property type="project" value="UniProtKB-EC"/>
</dbReference>
<dbReference type="GO" id="GO:0008252">
    <property type="term" value="F:nucleotidase activity"/>
    <property type="evidence" value="ECO:0007669"/>
    <property type="project" value="EnsemblFungi"/>
</dbReference>
<dbReference type="GO" id="GO:0045944">
    <property type="term" value="P:positive regulation of transcription by RNA polymerase II"/>
    <property type="evidence" value="ECO:0007669"/>
    <property type="project" value="EnsemblFungi"/>
</dbReference>
<dbReference type="GO" id="GO:0000722">
    <property type="term" value="P:telomere maintenance via recombination"/>
    <property type="evidence" value="ECO:0007669"/>
    <property type="project" value="EnsemblFungi"/>
</dbReference>
<dbReference type="GO" id="GO:0002949">
    <property type="term" value="P:tRNA threonylcarbamoyladenosine modification"/>
    <property type="evidence" value="ECO:0007669"/>
    <property type="project" value="UniProtKB-UniRule"/>
</dbReference>
<dbReference type="CDD" id="cd24132">
    <property type="entry name" value="ASKHA_NBD_OSGEP_like_euk"/>
    <property type="match status" value="1"/>
</dbReference>
<dbReference type="FunFam" id="3.30.420.40:FF:000038">
    <property type="entry name" value="Probable tRNA N6-adenosine threonylcarbamoyltransferase"/>
    <property type="match status" value="1"/>
</dbReference>
<dbReference type="FunFam" id="3.30.420.40:FF:000295">
    <property type="entry name" value="Probable tRNA N6-adenosine threonylcarbamoyltransferase"/>
    <property type="match status" value="1"/>
</dbReference>
<dbReference type="Gene3D" id="3.30.420.40">
    <property type="match status" value="2"/>
</dbReference>
<dbReference type="HAMAP" id="MF_01446">
    <property type="entry name" value="Kae1"/>
    <property type="match status" value="1"/>
</dbReference>
<dbReference type="InterPro" id="IPR043129">
    <property type="entry name" value="ATPase_NBD"/>
</dbReference>
<dbReference type="InterPro" id="IPR000905">
    <property type="entry name" value="Gcp-like_dom"/>
</dbReference>
<dbReference type="InterPro" id="IPR017861">
    <property type="entry name" value="KAE1/TsaD"/>
</dbReference>
<dbReference type="InterPro" id="IPR034680">
    <property type="entry name" value="Kae1_archaea_euk"/>
</dbReference>
<dbReference type="NCBIfam" id="TIGR00329">
    <property type="entry name" value="gcp_kae1"/>
    <property type="match status" value="1"/>
</dbReference>
<dbReference type="PANTHER" id="PTHR11735">
    <property type="entry name" value="TRNA N6-ADENOSINE THREONYLCARBAMOYLTRANSFERASE"/>
    <property type="match status" value="1"/>
</dbReference>
<dbReference type="PANTHER" id="PTHR11735:SF14">
    <property type="entry name" value="TRNA N6-ADENOSINE THREONYLCARBAMOYLTRANSFERASE"/>
    <property type="match status" value="1"/>
</dbReference>
<dbReference type="Pfam" id="PF00814">
    <property type="entry name" value="TsaD"/>
    <property type="match status" value="1"/>
</dbReference>
<dbReference type="PRINTS" id="PR00789">
    <property type="entry name" value="OSIALOPTASE"/>
</dbReference>
<dbReference type="SUPFAM" id="SSF53067">
    <property type="entry name" value="Actin-like ATPase domain"/>
    <property type="match status" value="1"/>
</dbReference>
<protein>
    <recommendedName>
        <fullName evidence="1">tRNA N6-adenosine threonylcarbamoyltransferase</fullName>
        <ecNumber evidence="1">2.3.1.234</ecNumber>
    </recommendedName>
    <alternativeName>
        <fullName>N6-L-threonylcarbamoyladenine synthase</fullName>
        <shortName>t(6)A synthase</shortName>
    </alternativeName>
    <alternativeName>
        <fullName evidence="1">t(6)A37 threonylcarbamoyladenosine biosynthesis protein kae1</fullName>
    </alternativeName>
    <alternativeName>
        <fullName evidence="1">tRNA threonylcarbamoyladenosine biosynthesis protein kae1</fullName>
    </alternativeName>
</protein>